<name>YBEY_RHIEC</name>
<proteinExistence type="inferred from homology"/>
<organism>
    <name type="scientific">Rhizobium etli (strain ATCC 51251 / DSM 11541 / JCM 21823 / NBRC 15573 / CFN 42)</name>
    <dbReference type="NCBI Taxonomy" id="347834"/>
    <lineage>
        <taxon>Bacteria</taxon>
        <taxon>Pseudomonadati</taxon>
        <taxon>Pseudomonadota</taxon>
        <taxon>Alphaproteobacteria</taxon>
        <taxon>Hyphomicrobiales</taxon>
        <taxon>Rhizobiaceae</taxon>
        <taxon>Rhizobium/Agrobacterium group</taxon>
        <taxon>Rhizobium</taxon>
    </lineage>
</organism>
<sequence>MAELDIQISIEDIGWPGEETLLVFCERVLGAAAIYLRDNEKQPFPKMPPEVSLVFTDDASIQDINAEWRGKDKPTNVLSFPAFPVQRGKVPGPMLGDIIIARETVEREAQELEKSFDDHLTHLLVHGFLHLLGYDHMNNAEAETMEGLETRILAQLGLSDPYEGQDLKMEP</sequence>
<comment type="function">
    <text evidence="1">Single strand-specific metallo-endoribonuclease involved in late-stage 70S ribosome quality control and in maturation of the 3' terminus of the 16S rRNA.</text>
</comment>
<comment type="cofactor">
    <cofactor evidence="1">
        <name>Zn(2+)</name>
        <dbReference type="ChEBI" id="CHEBI:29105"/>
    </cofactor>
    <text evidence="1">Binds 1 zinc ion.</text>
</comment>
<comment type="subcellular location">
    <subcellularLocation>
        <location evidence="1">Cytoplasm</location>
    </subcellularLocation>
</comment>
<comment type="similarity">
    <text evidence="1">Belongs to the endoribonuclease YbeY family.</text>
</comment>
<dbReference type="EC" id="3.1.-.-" evidence="1"/>
<dbReference type="EMBL" id="CP000133">
    <property type="protein sequence ID" value="ABC89196.1"/>
    <property type="molecule type" value="Genomic_DNA"/>
</dbReference>
<dbReference type="RefSeq" id="WP_011423756.1">
    <property type="nucleotide sequence ID" value="NC_007761.1"/>
</dbReference>
<dbReference type="SMR" id="Q2KD90"/>
<dbReference type="KEGG" id="ret:RHE_CH00374"/>
<dbReference type="eggNOG" id="COG0319">
    <property type="taxonomic scope" value="Bacteria"/>
</dbReference>
<dbReference type="HOGENOM" id="CLU_106710_0_0_5"/>
<dbReference type="OrthoDB" id="9807740at2"/>
<dbReference type="Proteomes" id="UP000001936">
    <property type="component" value="Chromosome"/>
</dbReference>
<dbReference type="GO" id="GO:0005737">
    <property type="term" value="C:cytoplasm"/>
    <property type="evidence" value="ECO:0007669"/>
    <property type="project" value="UniProtKB-SubCell"/>
</dbReference>
<dbReference type="GO" id="GO:0004222">
    <property type="term" value="F:metalloendopeptidase activity"/>
    <property type="evidence" value="ECO:0007669"/>
    <property type="project" value="InterPro"/>
</dbReference>
<dbReference type="GO" id="GO:0004521">
    <property type="term" value="F:RNA endonuclease activity"/>
    <property type="evidence" value="ECO:0007669"/>
    <property type="project" value="UniProtKB-UniRule"/>
</dbReference>
<dbReference type="GO" id="GO:0008270">
    <property type="term" value="F:zinc ion binding"/>
    <property type="evidence" value="ECO:0007669"/>
    <property type="project" value="UniProtKB-UniRule"/>
</dbReference>
<dbReference type="GO" id="GO:0006364">
    <property type="term" value="P:rRNA processing"/>
    <property type="evidence" value="ECO:0007669"/>
    <property type="project" value="UniProtKB-UniRule"/>
</dbReference>
<dbReference type="Gene3D" id="3.40.390.30">
    <property type="entry name" value="Metalloproteases ('zincins'), catalytic domain"/>
    <property type="match status" value="1"/>
</dbReference>
<dbReference type="HAMAP" id="MF_00009">
    <property type="entry name" value="Endoribonucl_YbeY"/>
    <property type="match status" value="1"/>
</dbReference>
<dbReference type="InterPro" id="IPR023091">
    <property type="entry name" value="MetalPrtase_cat_dom_sf_prd"/>
</dbReference>
<dbReference type="InterPro" id="IPR002036">
    <property type="entry name" value="YbeY"/>
</dbReference>
<dbReference type="InterPro" id="IPR020549">
    <property type="entry name" value="YbeY_CS"/>
</dbReference>
<dbReference type="NCBIfam" id="TIGR00043">
    <property type="entry name" value="rRNA maturation RNase YbeY"/>
    <property type="match status" value="1"/>
</dbReference>
<dbReference type="PANTHER" id="PTHR46986">
    <property type="entry name" value="ENDORIBONUCLEASE YBEY, CHLOROPLASTIC"/>
    <property type="match status" value="1"/>
</dbReference>
<dbReference type="PANTHER" id="PTHR46986:SF1">
    <property type="entry name" value="ENDORIBONUCLEASE YBEY, CHLOROPLASTIC"/>
    <property type="match status" value="1"/>
</dbReference>
<dbReference type="Pfam" id="PF02130">
    <property type="entry name" value="YbeY"/>
    <property type="match status" value="1"/>
</dbReference>
<dbReference type="SUPFAM" id="SSF55486">
    <property type="entry name" value="Metalloproteases ('zincins'), catalytic domain"/>
    <property type="match status" value="1"/>
</dbReference>
<dbReference type="PROSITE" id="PS01306">
    <property type="entry name" value="UPF0054"/>
    <property type="match status" value="1"/>
</dbReference>
<accession>Q2KD90</accession>
<evidence type="ECO:0000255" key="1">
    <source>
        <dbReference type="HAMAP-Rule" id="MF_00009"/>
    </source>
</evidence>
<reference key="1">
    <citation type="journal article" date="2006" name="Proc. Natl. Acad. Sci. U.S.A.">
        <title>The partitioned Rhizobium etli genome: genetic and metabolic redundancy in seven interacting replicons.</title>
        <authorList>
            <person name="Gonzalez V."/>
            <person name="Santamaria R.I."/>
            <person name="Bustos P."/>
            <person name="Hernandez-Gonzalez I."/>
            <person name="Medrano-Soto A."/>
            <person name="Moreno-Hagelsieb G."/>
            <person name="Janga S.C."/>
            <person name="Ramirez M.A."/>
            <person name="Jimenez-Jacinto V."/>
            <person name="Collado-Vides J."/>
            <person name="Davila G."/>
        </authorList>
    </citation>
    <scope>NUCLEOTIDE SEQUENCE [LARGE SCALE GENOMIC DNA]</scope>
    <source>
        <strain>ATCC 51251 / DSM 11541 / JCM 21823 / NBRC 15573 / CFN 42</strain>
    </source>
</reference>
<protein>
    <recommendedName>
        <fullName evidence="1">Endoribonuclease YbeY</fullName>
        <ecNumber evidence="1">3.1.-.-</ecNumber>
    </recommendedName>
</protein>
<keyword id="KW-0963">Cytoplasm</keyword>
<keyword id="KW-0255">Endonuclease</keyword>
<keyword id="KW-0378">Hydrolase</keyword>
<keyword id="KW-0479">Metal-binding</keyword>
<keyword id="KW-0540">Nuclease</keyword>
<keyword id="KW-1185">Reference proteome</keyword>
<keyword id="KW-0690">Ribosome biogenesis</keyword>
<keyword id="KW-0698">rRNA processing</keyword>
<keyword id="KW-0862">Zinc</keyword>
<gene>
    <name evidence="1" type="primary">ybeY</name>
    <name type="ordered locus">RHE_CH00374</name>
</gene>
<feature type="chain" id="PRO_0000284287" description="Endoribonuclease YbeY">
    <location>
        <begin position="1"/>
        <end position="171"/>
    </location>
</feature>
<feature type="binding site" evidence="1">
    <location>
        <position position="126"/>
    </location>
    <ligand>
        <name>Zn(2+)</name>
        <dbReference type="ChEBI" id="CHEBI:29105"/>
        <note>catalytic</note>
    </ligand>
</feature>
<feature type="binding site" evidence="1">
    <location>
        <position position="130"/>
    </location>
    <ligand>
        <name>Zn(2+)</name>
        <dbReference type="ChEBI" id="CHEBI:29105"/>
        <note>catalytic</note>
    </ligand>
</feature>
<feature type="binding site" evidence="1">
    <location>
        <position position="136"/>
    </location>
    <ligand>
        <name>Zn(2+)</name>
        <dbReference type="ChEBI" id="CHEBI:29105"/>
        <note>catalytic</note>
    </ligand>
</feature>